<name>BDNF_RAJCL</name>
<organism>
    <name type="scientific">Raja clavata</name>
    <name type="common">Thornback ray</name>
    <dbReference type="NCBI Taxonomy" id="7781"/>
    <lineage>
        <taxon>Eukaryota</taxon>
        <taxon>Metazoa</taxon>
        <taxon>Chordata</taxon>
        <taxon>Craniata</taxon>
        <taxon>Vertebrata</taxon>
        <taxon>Chondrichthyes</taxon>
        <taxon>Elasmobranchii</taxon>
        <taxon>Batoidea</taxon>
        <taxon>Rajiformes</taxon>
        <taxon>Rajidae</taxon>
        <taxon>Raja</taxon>
    </lineage>
</organism>
<proteinExistence type="inferred from homology"/>
<reference key="1">
    <citation type="journal article" date="1991" name="Neuron">
        <title>Evolutionary studies of the nerve growth factor family reveal a novel member abundantly expressed in Xenopus ovary.</title>
        <authorList>
            <person name="Hallboeoek F."/>
            <person name="Ibanez C.F."/>
            <person name="Persson H."/>
        </authorList>
    </citation>
    <scope>NUCLEOTIDE SEQUENCE</scope>
    <source>
        <tissue>Liver</tissue>
    </source>
</reference>
<comment type="function">
    <text>Promotes the survival of neuronal populations that are all located either in the central nervous system or directly connected to it.</text>
</comment>
<comment type="subcellular location">
    <subcellularLocation>
        <location>Secreted</location>
    </subcellularLocation>
</comment>
<comment type="similarity">
    <text evidence="1">Belongs to the NGF-beta family.</text>
</comment>
<gene>
    <name type="primary">bdnf</name>
</gene>
<accession>P25430</accession>
<feature type="chain" id="PRO_0000159609" description="Neurotrophic factor BDNF">
    <location>
        <begin position="1" status="less than"/>
        <end position="43" status="greater than"/>
    </location>
</feature>
<feature type="non-terminal residue">
    <location>
        <position position="1"/>
    </location>
</feature>
<feature type="non-terminal residue">
    <location>
        <position position="43"/>
    </location>
</feature>
<evidence type="ECO:0000305" key="1"/>
<keyword id="KW-0339">Growth factor</keyword>
<keyword id="KW-0964">Secreted</keyword>
<dbReference type="SMR" id="P25430"/>
<dbReference type="GO" id="GO:0030424">
    <property type="term" value="C:axon"/>
    <property type="evidence" value="ECO:0007669"/>
    <property type="project" value="TreeGrafter"/>
</dbReference>
<dbReference type="GO" id="GO:0030425">
    <property type="term" value="C:dendrite"/>
    <property type="evidence" value="ECO:0007669"/>
    <property type="project" value="TreeGrafter"/>
</dbReference>
<dbReference type="GO" id="GO:0005615">
    <property type="term" value="C:extracellular space"/>
    <property type="evidence" value="ECO:0007669"/>
    <property type="project" value="TreeGrafter"/>
</dbReference>
<dbReference type="GO" id="GO:0008021">
    <property type="term" value="C:synaptic vesicle"/>
    <property type="evidence" value="ECO:0007669"/>
    <property type="project" value="TreeGrafter"/>
</dbReference>
<dbReference type="GO" id="GO:0008083">
    <property type="term" value="F:growth factor activity"/>
    <property type="evidence" value="ECO:0007669"/>
    <property type="project" value="UniProtKB-KW"/>
</dbReference>
<dbReference type="GO" id="GO:0005163">
    <property type="term" value="F:nerve growth factor receptor binding"/>
    <property type="evidence" value="ECO:0007669"/>
    <property type="project" value="TreeGrafter"/>
</dbReference>
<dbReference type="GO" id="GO:0007169">
    <property type="term" value="P:cell surface receptor protein tyrosine kinase signaling pathway"/>
    <property type="evidence" value="ECO:0007669"/>
    <property type="project" value="TreeGrafter"/>
</dbReference>
<dbReference type="GO" id="GO:0050804">
    <property type="term" value="P:modulation of chemical synaptic transmission"/>
    <property type="evidence" value="ECO:0007669"/>
    <property type="project" value="TreeGrafter"/>
</dbReference>
<dbReference type="GO" id="GO:0043524">
    <property type="term" value="P:negative regulation of neuron apoptotic process"/>
    <property type="evidence" value="ECO:0007669"/>
    <property type="project" value="TreeGrafter"/>
</dbReference>
<dbReference type="GO" id="GO:0021675">
    <property type="term" value="P:nerve development"/>
    <property type="evidence" value="ECO:0007669"/>
    <property type="project" value="TreeGrafter"/>
</dbReference>
<dbReference type="GO" id="GO:0038180">
    <property type="term" value="P:nerve growth factor signaling pathway"/>
    <property type="evidence" value="ECO:0007669"/>
    <property type="project" value="TreeGrafter"/>
</dbReference>
<dbReference type="GO" id="GO:0048812">
    <property type="term" value="P:neuron projection morphogenesis"/>
    <property type="evidence" value="ECO:0007669"/>
    <property type="project" value="TreeGrafter"/>
</dbReference>
<dbReference type="Gene3D" id="2.10.90.10">
    <property type="entry name" value="Cystine-knot cytokines"/>
    <property type="match status" value="1"/>
</dbReference>
<dbReference type="InterPro" id="IPR029034">
    <property type="entry name" value="Cystine-knot_cytokine"/>
</dbReference>
<dbReference type="InterPro" id="IPR020408">
    <property type="entry name" value="Nerve_growth_factor-like"/>
</dbReference>
<dbReference type="InterPro" id="IPR002072">
    <property type="entry name" value="Nerve_growth_factor-rel"/>
</dbReference>
<dbReference type="InterPro" id="IPR019846">
    <property type="entry name" value="Nerve_growth_factor_CS"/>
</dbReference>
<dbReference type="PANTHER" id="PTHR11589:SF3">
    <property type="entry name" value="BRAIN-DERIVED NEUROTROPHIC FACTOR"/>
    <property type="match status" value="1"/>
</dbReference>
<dbReference type="PANTHER" id="PTHR11589">
    <property type="entry name" value="NERVE GROWTH FACTOR NGF -RELATED"/>
    <property type="match status" value="1"/>
</dbReference>
<dbReference type="Pfam" id="PF00243">
    <property type="entry name" value="NGF"/>
    <property type="match status" value="1"/>
</dbReference>
<dbReference type="SMART" id="SM00140">
    <property type="entry name" value="NGF"/>
    <property type="match status" value="1"/>
</dbReference>
<dbReference type="SUPFAM" id="SSF57501">
    <property type="entry name" value="Cystine-knot cytokines"/>
    <property type="match status" value="1"/>
</dbReference>
<dbReference type="PROSITE" id="PS00248">
    <property type="entry name" value="NGF_1"/>
    <property type="match status" value="1"/>
</dbReference>
<dbReference type="PROSITE" id="PS50270">
    <property type="entry name" value="NGF_2"/>
    <property type="match status" value="1"/>
</dbReference>
<protein>
    <recommendedName>
        <fullName evidence="1">Neurotrophic factor BDNF</fullName>
    </recommendedName>
    <alternativeName>
        <fullName>Brain-derived neurotrophic factor</fullName>
    </alternativeName>
</protein>
<sequence>KCNPKGFTNEGCRGIDKKHWNSQCRTSQSYVRALTMDSRKKIG</sequence>